<name>SYC_PARXL</name>
<dbReference type="EC" id="6.1.1.16" evidence="1"/>
<dbReference type="EMBL" id="CP000270">
    <property type="protein sequence ID" value="ABE31329.1"/>
    <property type="molecule type" value="Genomic_DNA"/>
</dbReference>
<dbReference type="RefSeq" id="WP_011488917.1">
    <property type="nucleotide sequence ID" value="NC_007951.1"/>
</dbReference>
<dbReference type="SMR" id="Q13X60"/>
<dbReference type="STRING" id="266265.Bxe_A1626"/>
<dbReference type="KEGG" id="bxb:DR64_3784"/>
<dbReference type="KEGG" id="bxe:Bxe_A1626"/>
<dbReference type="PATRIC" id="fig|266265.5.peg.2931"/>
<dbReference type="eggNOG" id="COG0215">
    <property type="taxonomic scope" value="Bacteria"/>
</dbReference>
<dbReference type="OrthoDB" id="9815130at2"/>
<dbReference type="Proteomes" id="UP000001817">
    <property type="component" value="Chromosome 1"/>
</dbReference>
<dbReference type="GO" id="GO:0005829">
    <property type="term" value="C:cytosol"/>
    <property type="evidence" value="ECO:0007669"/>
    <property type="project" value="TreeGrafter"/>
</dbReference>
<dbReference type="GO" id="GO:0005524">
    <property type="term" value="F:ATP binding"/>
    <property type="evidence" value="ECO:0007669"/>
    <property type="project" value="UniProtKB-UniRule"/>
</dbReference>
<dbReference type="GO" id="GO:0004817">
    <property type="term" value="F:cysteine-tRNA ligase activity"/>
    <property type="evidence" value="ECO:0007669"/>
    <property type="project" value="UniProtKB-UniRule"/>
</dbReference>
<dbReference type="GO" id="GO:0008270">
    <property type="term" value="F:zinc ion binding"/>
    <property type="evidence" value="ECO:0007669"/>
    <property type="project" value="UniProtKB-UniRule"/>
</dbReference>
<dbReference type="GO" id="GO:0006423">
    <property type="term" value="P:cysteinyl-tRNA aminoacylation"/>
    <property type="evidence" value="ECO:0007669"/>
    <property type="project" value="UniProtKB-UniRule"/>
</dbReference>
<dbReference type="CDD" id="cd07963">
    <property type="entry name" value="Anticodon_Ia_Cys"/>
    <property type="match status" value="1"/>
</dbReference>
<dbReference type="CDD" id="cd00672">
    <property type="entry name" value="CysRS_core"/>
    <property type="match status" value="1"/>
</dbReference>
<dbReference type="FunFam" id="3.40.50.620:FF:000009">
    <property type="entry name" value="Cysteine--tRNA ligase"/>
    <property type="match status" value="1"/>
</dbReference>
<dbReference type="Gene3D" id="1.20.120.1910">
    <property type="entry name" value="Cysteine-tRNA ligase, C-terminal anti-codon recognition domain"/>
    <property type="match status" value="1"/>
</dbReference>
<dbReference type="Gene3D" id="3.40.50.620">
    <property type="entry name" value="HUPs"/>
    <property type="match status" value="1"/>
</dbReference>
<dbReference type="HAMAP" id="MF_00041">
    <property type="entry name" value="Cys_tRNA_synth"/>
    <property type="match status" value="1"/>
</dbReference>
<dbReference type="InterPro" id="IPR015803">
    <property type="entry name" value="Cys-tRNA-ligase"/>
</dbReference>
<dbReference type="InterPro" id="IPR015273">
    <property type="entry name" value="Cys-tRNA-synt_Ia_DALR"/>
</dbReference>
<dbReference type="InterPro" id="IPR024909">
    <property type="entry name" value="Cys-tRNA/MSH_ligase"/>
</dbReference>
<dbReference type="InterPro" id="IPR056411">
    <property type="entry name" value="CysS_C"/>
</dbReference>
<dbReference type="InterPro" id="IPR014729">
    <property type="entry name" value="Rossmann-like_a/b/a_fold"/>
</dbReference>
<dbReference type="InterPro" id="IPR032678">
    <property type="entry name" value="tRNA-synt_1_cat_dom"/>
</dbReference>
<dbReference type="InterPro" id="IPR009080">
    <property type="entry name" value="tRNAsynth_Ia_anticodon-bd"/>
</dbReference>
<dbReference type="NCBIfam" id="TIGR00435">
    <property type="entry name" value="cysS"/>
    <property type="match status" value="1"/>
</dbReference>
<dbReference type="PANTHER" id="PTHR10890:SF3">
    <property type="entry name" value="CYSTEINE--TRNA LIGASE, CYTOPLASMIC"/>
    <property type="match status" value="1"/>
</dbReference>
<dbReference type="PANTHER" id="PTHR10890">
    <property type="entry name" value="CYSTEINYL-TRNA SYNTHETASE"/>
    <property type="match status" value="1"/>
</dbReference>
<dbReference type="Pfam" id="PF23493">
    <property type="entry name" value="CysS_C"/>
    <property type="match status" value="1"/>
</dbReference>
<dbReference type="Pfam" id="PF09190">
    <property type="entry name" value="DALR_2"/>
    <property type="match status" value="1"/>
</dbReference>
<dbReference type="Pfam" id="PF01406">
    <property type="entry name" value="tRNA-synt_1e"/>
    <property type="match status" value="1"/>
</dbReference>
<dbReference type="PRINTS" id="PR00983">
    <property type="entry name" value="TRNASYNTHCYS"/>
</dbReference>
<dbReference type="SMART" id="SM00840">
    <property type="entry name" value="DALR_2"/>
    <property type="match status" value="1"/>
</dbReference>
<dbReference type="SUPFAM" id="SSF47323">
    <property type="entry name" value="Anticodon-binding domain of a subclass of class I aminoacyl-tRNA synthetases"/>
    <property type="match status" value="1"/>
</dbReference>
<dbReference type="SUPFAM" id="SSF52374">
    <property type="entry name" value="Nucleotidylyl transferase"/>
    <property type="match status" value="1"/>
</dbReference>
<keyword id="KW-0030">Aminoacyl-tRNA synthetase</keyword>
<keyword id="KW-0067">ATP-binding</keyword>
<keyword id="KW-0963">Cytoplasm</keyword>
<keyword id="KW-0436">Ligase</keyword>
<keyword id="KW-0479">Metal-binding</keyword>
<keyword id="KW-0547">Nucleotide-binding</keyword>
<keyword id="KW-0648">Protein biosynthesis</keyword>
<keyword id="KW-1185">Reference proteome</keyword>
<keyword id="KW-0862">Zinc</keyword>
<protein>
    <recommendedName>
        <fullName evidence="1">Cysteine--tRNA ligase</fullName>
        <ecNumber evidence="1">6.1.1.16</ecNumber>
    </recommendedName>
    <alternativeName>
        <fullName evidence="1">Cysteinyl-tRNA synthetase</fullName>
        <shortName evidence="1">CysRS</shortName>
    </alternativeName>
</protein>
<evidence type="ECO:0000255" key="1">
    <source>
        <dbReference type="HAMAP-Rule" id="MF_00041"/>
    </source>
</evidence>
<proteinExistence type="inferred from homology"/>
<organism>
    <name type="scientific">Paraburkholderia xenovorans (strain LB400)</name>
    <dbReference type="NCBI Taxonomy" id="266265"/>
    <lineage>
        <taxon>Bacteria</taxon>
        <taxon>Pseudomonadati</taxon>
        <taxon>Pseudomonadota</taxon>
        <taxon>Betaproteobacteria</taxon>
        <taxon>Burkholderiales</taxon>
        <taxon>Burkholderiaceae</taxon>
        <taxon>Paraburkholderia</taxon>
    </lineage>
</organism>
<accession>Q13X60</accession>
<reference key="1">
    <citation type="journal article" date="2006" name="Proc. Natl. Acad. Sci. U.S.A.">
        <title>Burkholderia xenovorans LB400 harbors a multi-replicon, 9.73-Mbp genome shaped for versatility.</title>
        <authorList>
            <person name="Chain P.S.G."/>
            <person name="Denef V.J."/>
            <person name="Konstantinidis K.T."/>
            <person name="Vergez L.M."/>
            <person name="Agullo L."/>
            <person name="Reyes V.L."/>
            <person name="Hauser L."/>
            <person name="Cordova M."/>
            <person name="Gomez L."/>
            <person name="Gonzalez M."/>
            <person name="Land M."/>
            <person name="Lao V."/>
            <person name="Larimer F."/>
            <person name="LiPuma J.J."/>
            <person name="Mahenthiralingam E."/>
            <person name="Malfatti S.A."/>
            <person name="Marx C.J."/>
            <person name="Parnell J.J."/>
            <person name="Ramette A."/>
            <person name="Richardson P."/>
            <person name="Seeger M."/>
            <person name="Smith D."/>
            <person name="Spilker T."/>
            <person name="Sul W.J."/>
            <person name="Tsoi T.V."/>
            <person name="Ulrich L.E."/>
            <person name="Zhulin I.B."/>
            <person name="Tiedje J.M."/>
        </authorList>
    </citation>
    <scope>NUCLEOTIDE SEQUENCE [LARGE SCALE GENOMIC DNA]</scope>
    <source>
        <strain>LB400</strain>
    </source>
</reference>
<feature type="chain" id="PRO_1000006574" description="Cysteine--tRNA ligase">
    <location>
        <begin position="1"/>
        <end position="465"/>
    </location>
</feature>
<feature type="short sequence motif" description="'HIGH' region">
    <location>
        <begin position="32"/>
        <end position="42"/>
    </location>
</feature>
<feature type="short sequence motif" description="'KMSKS' region">
    <location>
        <begin position="271"/>
        <end position="275"/>
    </location>
</feature>
<feature type="binding site" evidence="1">
    <location>
        <position position="30"/>
    </location>
    <ligand>
        <name>Zn(2+)</name>
        <dbReference type="ChEBI" id="CHEBI:29105"/>
    </ligand>
</feature>
<feature type="binding site" evidence="1">
    <location>
        <position position="214"/>
    </location>
    <ligand>
        <name>Zn(2+)</name>
        <dbReference type="ChEBI" id="CHEBI:29105"/>
    </ligand>
</feature>
<feature type="binding site" evidence="1">
    <location>
        <position position="239"/>
    </location>
    <ligand>
        <name>Zn(2+)</name>
        <dbReference type="ChEBI" id="CHEBI:29105"/>
    </ligand>
</feature>
<feature type="binding site" evidence="1">
    <location>
        <position position="243"/>
    </location>
    <ligand>
        <name>Zn(2+)</name>
        <dbReference type="ChEBI" id="CHEBI:29105"/>
    </ligand>
</feature>
<feature type="binding site" evidence="1">
    <location>
        <position position="274"/>
    </location>
    <ligand>
        <name>ATP</name>
        <dbReference type="ChEBI" id="CHEBI:30616"/>
    </ligand>
</feature>
<comment type="catalytic activity">
    <reaction evidence="1">
        <text>tRNA(Cys) + L-cysteine + ATP = L-cysteinyl-tRNA(Cys) + AMP + diphosphate</text>
        <dbReference type="Rhea" id="RHEA:17773"/>
        <dbReference type="Rhea" id="RHEA-COMP:9661"/>
        <dbReference type="Rhea" id="RHEA-COMP:9679"/>
        <dbReference type="ChEBI" id="CHEBI:30616"/>
        <dbReference type="ChEBI" id="CHEBI:33019"/>
        <dbReference type="ChEBI" id="CHEBI:35235"/>
        <dbReference type="ChEBI" id="CHEBI:78442"/>
        <dbReference type="ChEBI" id="CHEBI:78517"/>
        <dbReference type="ChEBI" id="CHEBI:456215"/>
        <dbReference type="EC" id="6.1.1.16"/>
    </reaction>
</comment>
<comment type="cofactor">
    <cofactor evidence="1">
        <name>Zn(2+)</name>
        <dbReference type="ChEBI" id="CHEBI:29105"/>
    </cofactor>
    <text evidence="1">Binds 1 zinc ion per subunit.</text>
</comment>
<comment type="subunit">
    <text evidence="1">Monomer.</text>
</comment>
<comment type="subcellular location">
    <subcellularLocation>
        <location evidence="1">Cytoplasm</location>
    </subcellularLocation>
</comment>
<comment type="similarity">
    <text evidence="1">Belongs to the class-I aminoacyl-tRNA synthetase family.</text>
</comment>
<sequence>MESLRIYNTLARDKQTFVPLQDGVVRMYVCGMTVYDYCHVGHARVMVVFDIVQRWLRTLGYNVTYVRNITDIDDKIIRRAVENGETIKSLTDRFIKALHEDADALGIQRPDIEPRATDFIPQMLGMIERLEANGYAYQASDGDVNYAVRKFANYGKLSGKSLEDLRAGERVAANDAKQDPLDFVLWKQAKPQEPADTGWDSKYGRGRPGWHIECSAMGCTLLGEHFDIHGGGQDLQFPHHENEIAQSEAATGQTFVNFWMHNGYVQIDNEKMSKSLNNFFTIREVLAQYDAEVVRFFIARAHYRSPLNYSDVHIDDARNALTRLYTALKDVTPDGAELDWNEAYAQRFQAAMNDDFNTPVAVSVLFELASEVNRTRDPALARQLRLLGAVIGLLGREPRAYLQQAAGAAAVGALEAAAIEAKIAARAAAKQAKDFAAADRIRSELLEAGVALEDKPGGLTEWRRV</sequence>
<gene>
    <name evidence="1" type="primary">cysS</name>
    <name type="ordered locus">Bxeno_A2791</name>
    <name type="ORF">Bxe_A1626</name>
</gene>